<keyword id="KW-0687">Ribonucleoprotein</keyword>
<keyword id="KW-0689">Ribosomal protein</keyword>
<dbReference type="EMBL" id="AP006628">
    <property type="protein sequence ID" value="BAD04828.1"/>
    <property type="molecule type" value="Genomic_DNA"/>
</dbReference>
<dbReference type="SMR" id="Q6YPI4"/>
<dbReference type="STRING" id="262768.PAM_743"/>
<dbReference type="KEGG" id="poy:PAM_743"/>
<dbReference type="eggNOG" id="COG0291">
    <property type="taxonomic scope" value="Bacteria"/>
</dbReference>
<dbReference type="HOGENOM" id="CLU_169643_3_1_14"/>
<dbReference type="BioCyc" id="OYEL262768:G1G26-898-MONOMER"/>
<dbReference type="Proteomes" id="UP000002523">
    <property type="component" value="Chromosome"/>
</dbReference>
<dbReference type="GO" id="GO:1990904">
    <property type="term" value="C:ribonucleoprotein complex"/>
    <property type="evidence" value="ECO:0007669"/>
    <property type="project" value="UniProtKB-KW"/>
</dbReference>
<dbReference type="GO" id="GO:0005840">
    <property type="term" value="C:ribosome"/>
    <property type="evidence" value="ECO:0007669"/>
    <property type="project" value="UniProtKB-KW"/>
</dbReference>
<dbReference type="GO" id="GO:0003735">
    <property type="term" value="F:structural constituent of ribosome"/>
    <property type="evidence" value="ECO:0007669"/>
    <property type="project" value="InterPro"/>
</dbReference>
<dbReference type="GO" id="GO:0006412">
    <property type="term" value="P:translation"/>
    <property type="evidence" value="ECO:0007669"/>
    <property type="project" value="UniProtKB-UniRule"/>
</dbReference>
<dbReference type="Gene3D" id="4.10.410.60">
    <property type="match status" value="1"/>
</dbReference>
<dbReference type="HAMAP" id="MF_00514">
    <property type="entry name" value="Ribosomal_bL35"/>
    <property type="match status" value="1"/>
</dbReference>
<dbReference type="InterPro" id="IPR001706">
    <property type="entry name" value="Ribosomal_bL35"/>
</dbReference>
<dbReference type="InterPro" id="IPR021137">
    <property type="entry name" value="Ribosomal_bL35-like"/>
</dbReference>
<dbReference type="InterPro" id="IPR018265">
    <property type="entry name" value="Ribosomal_bL35_CS"/>
</dbReference>
<dbReference type="InterPro" id="IPR037229">
    <property type="entry name" value="Ribosomal_bL35_sf"/>
</dbReference>
<dbReference type="NCBIfam" id="TIGR00001">
    <property type="entry name" value="rpmI_bact"/>
    <property type="match status" value="1"/>
</dbReference>
<dbReference type="Pfam" id="PF01632">
    <property type="entry name" value="Ribosomal_L35p"/>
    <property type="match status" value="1"/>
</dbReference>
<dbReference type="PRINTS" id="PR00064">
    <property type="entry name" value="RIBOSOMALL35"/>
</dbReference>
<dbReference type="SUPFAM" id="SSF143034">
    <property type="entry name" value="L35p-like"/>
    <property type="match status" value="1"/>
</dbReference>
<dbReference type="PROSITE" id="PS00936">
    <property type="entry name" value="RIBOSOMAL_L35"/>
    <property type="match status" value="1"/>
</dbReference>
<reference key="1">
    <citation type="journal article" date="2004" name="Nat. Genet.">
        <title>Reductive evolution suggested from the complete genome sequence of a plant-pathogenic phytoplasma.</title>
        <authorList>
            <person name="Oshima K."/>
            <person name="Kakizawa S."/>
            <person name="Nishigawa H."/>
            <person name="Jung H.-Y."/>
            <person name="Wei W."/>
            <person name="Suzuki S."/>
            <person name="Arashida R."/>
            <person name="Nakata D."/>
            <person name="Miyata S."/>
            <person name="Ugaki M."/>
            <person name="Namba S."/>
        </authorList>
    </citation>
    <scope>NUCLEOTIDE SEQUENCE [LARGE SCALE GENOMIC DNA]</scope>
    <source>
        <strain>OY-M</strain>
    </source>
</reference>
<gene>
    <name evidence="1" type="primary">rpmI</name>
    <name type="ordered locus">PAM_743</name>
</gene>
<evidence type="ECO:0000255" key="1">
    <source>
        <dbReference type="HAMAP-Rule" id="MF_00514"/>
    </source>
</evidence>
<evidence type="ECO:0000305" key="2"/>
<accession>Q6YPI4</accession>
<sequence length="68" mass="7871">MIKVIKKKSHSGLKKRIKISKKKKLLRGHAYKNHLAASKTTKQNRQLRGVTCVKLCDYNRIKTLIRGL</sequence>
<organism>
    <name type="scientific">Onion yellows phytoplasma (strain OY-M)</name>
    <dbReference type="NCBI Taxonomy" id="262768"/>
    <lineage>
        <taxon>Bacteria</taxon>
        <taxon>Bacillati</taxon>
        <taxon>Mycoplasmatota</taxon>
        <taxon>Mollicutes</taxon>
        <taxon>Acholeplasmatales</taxon>
        <taxon>Acholeplasmataceae</taxon>
        <taxon>Candidatus Phytoplasma</taxon>
        <taxon>16SrI (Aster yellows group)</taxon>
    </lineage>
</organism>
<comment type="similarity">
    <text evidence="1">Belongs to the bacterial ribosomal protein bL35 family.</text>
</comment>
<protein>
    <recommendedName>
        <fullName evidence="1">Large ribosomal subunit protein bL35</fullName>
    </recommendedName>
    <alternativeName>
        <fullName evidence="2">50S ribosomal protein L35</fullName>
    </alternativeName>
</protein>
<proteinExistence type="inferred from homology"/>
<name>RL35_ONYPE</name>
<feature type="chain" id="PRO_0000177393" description="Large ribosomal subunit protein bL35">
    <location>
        <begin position="1"/>
        <end position="68"/>
    </location>
</feature>